<organism>
    <name type="scientific">Schizosaccharomyces pombe (strain 972 / ATCC 24843)</name>
    <name type="common">Fission yeast</name>
    <dbReference type="NCBI Taxonomy" id="284812"/>
    <lineage>
        <taxon>Eukaryota</taxon>
        <taxon>Fungi</taxon>
        <taxon>Dikarya</taxon>
        <taxon>Ascomycota</taxon>
        <taxon>Taphrinomycotina</taxon>
        <taxon>Schizosaccharomycetes</taxon>
        <taxon>Schizosaccharomycetales</taxon>
        <taxon>Schizosaccharomycetaceae</taxon>
        <taxon>Schizosaccharomyces</taxon>
    </lineage>
</organism>
<reference key="1">
    <citation type="journal article" date="1997" name="Curr. Genet.">
        <title>Molecular characterization of a novel fission yeast gene spUAP2 that interacts with the splicing factor spU2AF59.</title>
        <authorList>
            <person name="McKinny R."/>
            <person name="Wentz-Hunter K."/>
            <person name="Schmidt H."/>
            <person name="Potashkin J."/>
        </authorList>
    </citation>
    <scope>NUCLEOTIDE SEQUENCE [GENOMIC DNA]</scope>
    <scope>FUNCTION</scope>
    <scope>SUBUNIT</scope>
    <source>
        <strain>972 / ATCC 24843</strain>
    </source>
</reference>
<reference key="2">
    <citation type="journal article" date="2002" name="Nature">
        <title>The genome sequence of Schizosaccharomyces pombe.</title>
        <authorList>
            <person name="Wood V."/>
            <person name="Gwilliam R."/>
            <person name="Rajandream M.A."/>
            <person name="Lyne M.H."/>
            <person name="Lyne R."/>
            <person name="Stewart A."/>
            <person name="Sgouros J.G."/>
            <person name="Peat N."/>
            <person name="Hayles J."/>
            <person name="Baker S.G."/>
            <person name="Basham D."/>
            <person name="Bowman S."/>
            <person name="Brooks K."/>
            <person name="Brown D."/>
            <person name="Brown S."/>
            <person name="Chillingworth T."/>
            <person name="Churcher C.M."/>
            <person name="Collins M."/>
            <person name="Connor R."/>
            <person name="Cronin A."/>
            <person name="Davis P."/>
            <person name="Feltwell T."/>
            <person name="Fraser A."/>
            <person name="Gentles S."/>
            <person name="Goble A."/>
            <person name="Hamlin N."/>
            <person name="Harris D.E."/>
            <person name="Hidalgo J."/>
            <person name="Hodgson G."/>
            <person name="Holroyd S."/>
            <person name="Hornsby T."/>
            <person name="Howarth S."/>
            <person name="Huckle E.J."/>
            <person name="Hunt S."/>
            <person name="Jagels K."/>
            <person name="James K.D."/>
            <person name="Jones L."/>
            <person name="Jones M."/>
            <person name="Leather S."/>
            <person name="McDonald S."/>
            <person name="McLean J."/>
            <person name="Mooney P."/>
            <person name="Moule S."/>
            <person name="Mungall K.L."/>
            <person name="Murphy L.D."/>
            <person name="Niblett D."/>
            <person name="Odell C."/>
            <person name="Oliver K."/>
            <person name="O'Neil S."/>
            <person name="Pearson D."/>
            <person name="Quail M.A."/>
            <person name="Rabbinowitsch E."/>
            <person name="Rutherford K.M."/>
            <person name="Rutter S."/>
            <person name="Saunders D."/>
            <person name="Seeger K."/>
            <person name="Sharp S."/>
            <person name="Skelton J."/>
            <person name="Simmonds M.N."/>
            <person name="Squares R."/>
            <person name="Squares S."/>
            <person name="Stevens K."/>
            <person name="Taylor K."/>
            <person name="Taylor R.G."/>
            <person name="Tivey A."/>
            <person name="Walsh S.V."/>
            <person name="Warren T."/>
            <person name="Whitehead S."/>
            <person name="Woodward J.R."/>
            <person name="Volckaert G."/>
            <person name="Aert R."/>
            <person name="Robben J."/>
            <person name="Grymonprez B."/>
            <person name="Weltjens I."/>
            <person name="Vanstreels E."/>
            <person name="Rieger M."/>
            <person name="Schaefer M."/>
            <person name="Mueller-Auer S."/>
            <person name="Gabel C."/>
            <person name="Fuchs M."/>
            <person name="Duesterhoeft A."/>
            <person name="Fritzc C."/>
            <person name="Holzer E."/>
            <person name="Moestl D."/>
            <person name="Hilbert H."/>
            <person name="Borzym K."/>
            <person name="Langer I."/>
            <person name="Beck A."/>
            <person name="Lehrach H."/>
            <person name="Reinhardt R."/>
            <person name="Pohl T.M."/>
            <person name="Eger P."/>
            <person name="Zimmermann W."/>
            <person name="Wedler H."/>
            <person name="Wambutt R."/>
            <person name="Purnelle B."/>
            <person name="Goffeau A."/>
            <person name="Cadieu E."/>
            <person name="Dreano S."/>
            <person name="Gloux S."/>
            <person name="Lelaure V."/>
            <person name="Mottier S."/>
            <person name="Galibert F."/>
            <person name="Aves S.J."/>
            <person name="Xiang Z."/>
            <person name="Hunt C."/>
            <person name="Moore K."/>
            <person name="Hurst S.M."/>
            <person name="Lucas M."/>
            <person name="Rochet M."/>
            <person name="Gaillardin C."/>
            <person name="Tallada V.A."/>
            <person name="Garzon A."/>
            <person name="Thode G."/>
            <person name="Daga R.R."/>
            <person name="Cruzado L."/>
            <person name="Jimenez J."/>
            <person name="Sanchez M."/>
            <person name="del Rey F."/>
            <person name="Benito J."/>
            <person name="Dominguez A."/>
            <person name="Revuelta J.L."/>
            <person name="Moreno S."/>
            <person name="Armstrong J."/>
            <person name="Forsburg S.L."/>
            <person name="Cerutti L."/>
            <person name="Lowe T."/>
            <person name="McCombie W.R."/>
            <person name="Paulsen I."/>
            <person name="Potashkin J."/>
            <person name="Shpakovski G.V."/>
            <person name="Ussery D."/>
            <person name="Barrell B.G."/>
            <person name="Nurse P."/>
        </authorList>
    </citation>
    <scope>NUCLEOTIDE SEQUENCE [LARGE SCALE GENOMIC DNA]</scope>
    <source>
        <strain>972 / ATCC 24843</strain>
    </source>
</reference>
<feature type="chain" id="PRO_0000082003" description="Splicing factor U2AF-associated protein 2">
    <location>
        <begin position="1"/>
        <end position="367"/>
    </location>
</feature>
<feature type="domain" description="RRM 1" evidence="1">
    <location>
        <begin position="112"/>
        <end position="193"/>
    </location>
</feature>
<feature type="domain" description="RRM 2" evidence="1">
    <location>
        <begin position="268"/>
        <end position="329"/>
    </location>
</feature>
<feature type="region of interest" description="Disordered" evidence="2">
    <location>
        <begin position="36"/>
        <end position="104"/>
    </location>
</feature>
<feature type="compositionally biased region" description="Basic and acidic residues" evidence="2">
    <location>
        <begin position="61"/>
        <end position="78"/>
    </location>
</feature>
<keyword id="KW-0507">mRNA processing</keyword>
<keyword id="KW-0508">mRNA splicing</keyword>
<keyword id="KW-1185">Reference proteome</keyword>
<keyword id="KW-0677">Repeat</keyword>
<keyword id="KW-0694">RNA-binding</keyword>
<protein>
    <recommendedName>
        <fullName>Splicing factor U2AF-associated protein 2</fullName>
    </recommendedName>
    <alternativeName>
        <fullName>Cold sensitive U2 snRNA suppressor 2 homolog</fullName>
    </alternativeName>
</protein>
<proteinExistence type="evidence at protein level"/>
<name>UAP2_SCHPO</name>
<evidence type="ECO:0000255" key="1">
    <source>
        <dbReference type="PROSITE-ProRule" id="PRU00176"/>
    </source>
</evidence>
<evidence type="ECO:0000256" key="2">
    <source>
        <dbReference type="SAM" id="MobiDB-lite"/>
    </source>
</evidence>
<evidence type="ECO:0000269" key="3">
    <source>
    </source>
</evidence>
<evidence type="ECO:0000305" key="4"/>
<gene>
    <name type="primary">uap2</name>
    <name type="ORF">SPBC1289.02c</name>
</gene>
<comment type="function">
    <text evidence="3">Has a role in pre-mRNA splicing.</text>
</comment>
<comment type="subunit">
    <text evidence="3">Interacts with the U2AF large and U2AF small subunits.</text>
</comment>
<comment type="similarity">
    <text evidence="4">Belongs to the HTATSF1 family.</text>
</comment>
<dbReference type="EMBL" id="U97681">
    <property type="protein sequence ID" value="AAC04326.1"/>
    <property type="molecule type" value="Genomic_DNA"/>
</dbReference>
<dbReference type="EMBL" id="CU329671">
    <property type="protein sequence ID" value="CAB38682.1"/>
    <property type="molecule type" value="Genomic_DNA"/>
</dbReference>
<dbReference type="PIR" id="T39353">
    <property type="entry name" value="T39353"/>
</dbReference>
<dbReference type="RefSeq" id="NP_596826.1">
    <property type="nucleotide sequence ID" value="NM_001023847.2"/>
</dbReference>
<dbReference type="SMR" id="O43120"/>
<dbReference type="BioGRID" id="276333">
    <property type="interactions" value="62"/>
</dbReference>
<dbReference type="FunCoup" id="O43120">
    <property type="interactions" value="107"/>
</dbReference>
<dbReference type="IntAct" id="O43120">
    <property type="interactions" value="1"/>
</dbReference>
<dbReference type="STRING" id="284812.O43120"/>
<dbReference type="iPTMnet" id="O43120"/>
<dbReference type="PaxDb" id="4896-SPBC1289.02c.1"/>
<dbReference type="EnsemblFungi" id="SPBC1289.02c.1">
    <property type="protein sequence ID" value="SPBC1289.02c.1:pep"/>
    <property type="gene ID" value="SPBC1289.02c"/>
</dbReference>
<dbReference type="GeneID" id="2539783"/>
<dbReference type="KEGG" id="spo:2539783"/>
<dbReference type="PomBase" id="SPBC1289.02c">
    <property type="gene designation" value="uap2"/>
</dbReference>
<dbReference type="VEuPathDB" id="FungiDB:SPBC1289.02c"/>
<dbReference type="eggNOG" id="KOG1548">
    <property type="taxonomic scope" value="Eukaryota"/>
</dbReference>
<dbReference type="HOGENOM" id="CLU_026945_0_2_1"/>
<dbReference type="InParanoid" id="O43120"/>
<dbReference type="OMA" id="DTDFRFG"/>
<dbReference type="PhylomeDB" id="O43120"/>
<dbReference type="PRO" id="PR:O43120"/>
<dbReference type="Proteomes" id="UP000002485">
    <property type="component" value="Chromosome II"/>
</dbReference>
<dbReference type="GO" id="GO:0005686">
    <property type="term" value="C:U2 snRNP"/>
    <property type="evidence" value="ECO:0000353"/>
    <property type="project" value="PomBase"/>
</dbReference>
<dbReference type="GO" id="GO:0005684">
    <property type="term" value="C:U2-type spliceosomal complex"/>
    <property type="evidence" value="ECO:0000353"/>
    <property type="project" value="PomBase"/>
</dbReference>
<dbReference type="GO" id="GO:0003723">
    <property type="term" value="F:RNA binding"/>
    <property type="evidence" value="ECO:0000318"/>
    <property type="project" value="GO_Central"/>
</dbReference>
<dbReference type="GO" id="GO:0045292">
    <property type="term" value="P:mRNA cis splicing, via spliceosome"/>
    <property type="evidence" value="ECO:0000304"/>
    <property type="project" value="PomBase"/>
</dbReference>
<dbReference type="CDD" id="cd12281">
    <property type="entry name" value="RRM1_TatSF1_like"/>
    <property type="match status" value="1"/>
</dbReference>
<dbReference type="CDD" id="cd12285">
    <property type="entry name" value="RRM3_RBM39_like"/>
    <property type="match status" value="1"/>
</dbReference>
<dbReference type="FunFam" id="3.30.70.330:FF:000105">
    <property type="entry name" value="HIV Tat-specific factor 1 homolog"/>
    <property type="match status" value="1"/>
</dbReference>
<dbReference type="FunFam" id="3.30.70.330:FF:000329">
    <property type="entry name" value="splicing factor U2AF-associated protein 2"/>
    <property type="match status" value="1"/>
</dbReference>
<dbReference type="Gene3D" id="3.30.70.330">
    <property type="match status" value="2"/>
</dbReference>
<dbReference type="InterPro" id="IPR012677">
    <property type="entry name" value="Nucleotide-bd_a/b_plait_sf"/>
</dbReference>
<dbReference type="InterPro" id="IPR035979">
    <property type="entry name" value="RBD_domain_sf"/>
</dbReference>
<dbReference type="InterPro" id="IPR000504">
    <property type="entry name" value="RRM_dom"/>
</dbReference>
<dbReference type="InterPro" id="IPR034393">
    <property type="entry name" value="TatSF1-like"/>
</dbReference>
<dbReference type="InterPro" id="IPR034392">
    <property type="entry name" value="TatSF1-like_RRM1"/>
</dbReference>
<dbReference type="PANTHER" id="PTHR15608:SF0">
    <property type="entry name" value="HIV TAT-SPECIFIC FACTOR 1"/>
    <property type="match status" value="1"/>
</dbReference>
<dbReference type="PANTHER" id="PTHR15608">
    <property type="entry name" value="SPLICING FACTOR U2AF-ASSOCIATED PROTEIN 2"/>
    <property type="match status" value="1"/>
</dbReference>
<dbReference type="Pfam" id="PF00076">
    <property type="entry name" value="RRM_1"/>
    <property type="match status" value="2"/>
</dbReference>
<dbReference type="SMART" id="SM00360">
    <property type="entry name" value="RRM"/>
    <property type="match status" value="2"/>
</dbReference>
<dbReference type="SUPFAM" id="SSF54928">
    <property type="entry name" value="RNA-binding domain, RBD"/>
    <property type="match status" value="2"/>
</dbReference>
<dbReference type="PROSITE" id="PS50102">
    <property type="entry name" value="RRM"/>
    <property type="match status" value="2"/>
</dbReference>
<sequence>MSSQPFWDERIHRWRCLGSEGNELIYIDEEQTWKDYDPNSLKMNKAGSTGAEVSDVTAEATEGKESSNGEDRHTKRLYESTSAEGYPSGSRNKKSKSENSEASPAPVINKAVYIQGLPLDVTVDEIEEVFKKCGVIAKNIDNGTPRIKIYRTEDGTPKGDALIVFFRSESVELAEQLFDDTEFRYGSGQKMRVQKANIDYKKEKTVNKDVGGALKKKALRLRQQQMQQISSWDDVDEEVDDKRKKRFNKIVVLKHIFTLEELDKTPELLIDLKDDITEEAEKCGRVTNVVLYDKEPDGVVTVRFSNNEEAEACVRLMQGRYFDGRVVEASIYDGKVRFQKSGKHTLDDEEDEEKRLEKFADWLENSN</sequence>
<accession>O43120</accession>